<gene>
    <name evidence="5" type="primary">PSMG4</name>
    <name type="synonym">C6orf86</name>
    <name type="synonym">PAC4</name>
</gene>
<name>PSMG4_HUMAN</name>
<feature type="chain" id="PRO_0000341397" description="Proteasome assembly chaperone 4">
    <location>
        <begin position="1"/>
        <end position="123"/>
    </location>
</feature>
<feature type="splice variant" id="VSP_046635" description="In isoform 2." evidence="4">
    <original>L</original>
    <variation>LGLGGKTGLACECGVEWGLSKGHEAECSTLPTPQHTSCGP</variation>
    <location>
        <position position="83"/>
    </location>
</feature>
<feature type="splice variant" id="VSP_046636" description="In isoform 3." evidence="4">
    <original>ARKTNKQVFVSYNLQNTDSNFALLVENRIKEEMEAFPEKF</original>
    <variation>GMYPQLALHGQPGGAHSLMEP</variation>
    <location>
        <begin position="84"/>
        <end position="123"/>
    </location>
</feature>
<feature type="sequence conflict" description="In Ref. 3; CD173424." evidence="4" ref="3">
    <original>L</original>
    <variation>Q</variation>
    <location>
        <position position="47"/>
    </location>
</feature>
<feature type="strand" evidence="6">
    <location>
        <begin position="13"/>
        <end position="21"/>
    </location>
</feature>
<feature type="strand" evidence="6">
    <location>
        <begin position="24"/>
        <end position="32"/>
    </location>
</feature>
<feature type="strand" evidence="6">
    <location>
        <begin position="34"/>
        <end position="42"/>
    </location>
</feature>
<feature type="strand" evidence="6">
    <location>
        <begin position="50"/>
        <end position="54"/>
    </location>
</feature>
<feature type="strand" evidence="6">
    <location>
        <begin position="57"/>
        <end position="61"/>
    </location>
</feature>
<feature type="strand" evidence="6">
    <location>
        <begin position="63"/>
        <end position="66"/>
    </location>
</feature>
<feature type="helix" evidence="6">
    <location>
        <begin position="75"/>
        <end position="87"/>
    </location>
</feature>
<feature type="strand" evidence="6">
    <location>
        <begin position="88"/>
        <end position="95"/>
    </location>
</feature>
<feature type="helix" evidence="6">
    <location>
        <begin position="102"/>
        <end position="118"/>
    </location>
</feature>
<feature type="helix" evidence="6">
    <location>
        <begin position="120"/>
        <end position="122"/>
    </location>
</feature>
<feature type="sequence variant" id="VAR_084585" description="In dbSNP:rs4959786." evidence="2">
    <original>W</original>
    <variation>R</variation>
    <location sequence="Q5JS54-2">
        <position position="99"/>
    </location>
</feature>
<comment type="function">
    <text evidence="1">Chaperone protein which promotes assembly of the 20S proteasome.</text>
</comment>
<comment type="subunit">
    <text evidence="1">Interacts with PSMG3. Associates with alpha subunits of the 20S proteasome.</text>
</comment>
<comment type="alternative products">
    <event type="alternative splicing"/>
    <isoform>
        <id>Q5JS54-1</id>
        <name>1</name>
        <sequence type="displayed"/>
    </isoform>
    <isoform>
        <id>Q5JS54-2</id>
        <name>2</name>
        <sequence type="described" ref="VSP_046635"/>
    </isoform>
    <isoform>
        <id>Q5JS54-3</id>
        <name>3</name>
        <sequence type="described" ref="VSP_046636"/>
    </isoform>
</comment>
<comment type="similarity">
    <text evidence="4">Belongs to the PSMG4 family.</text>
</comment>
<keyword id="KW-0002">3D-structure</keyword>
<keyword id="KW-0025">Alternative splicing</keyword>
<keyword id="KW-0143">Chaperone</keyword>
<keyword id="KW-1267">Proteomics identification</keyword>
<keyword id="KW-1185">Reference proteome</keyword>
<evidence type="ECO:0000250" key="1">
    <source>
        <dbReference type="UniProtKB" id="P0C7N9"/>
    </source>
</evidence>
<evidence type="ECO:0000269" key="2">
    <source>
    </source>
</evidence>
<evidence type="ECO:0000303" key="3">
    <source>
    </source>
</evidence>
<evidence type="ECO:0000305" key="4"/>
<evidence type="ECO:0000312" key="5">
    <source>
        <dbReference type="HGNC" id="HGNC:21108"/>
    </source>
</evidence>
<evidence type="ECO:0007829" key="6">
    <source>
        <dbReference type="PDB" id="5WTQ"/>
    </source>
</evidence>
<reference key="1">
    <citation type="journal article" date="2003" name="Nature">
        <title>The DNA sequence and analysis of human chromosome 6.</title>
        <authorList>
            <person name="Mungall A.J."/>
            <person name="Palmer S.A."/>
            <person name="Sims S.K."/>
            <person name="Edwards C.A."/>
            <person name="Ashurst J.L."/>
            <person name="Wilming L."/>
            <person name="Jones M.C."/>
            <person name="Horton R."/>
            <person name="Hunt S.E."/>
            <person name="Scott C.E."/>
            <person name="Gilbert J.G.R."/>
            <person name="Clamp M.E."/>
            <person name="Bethel G."/>
            <person name="Milne S."/>
            <person name="Ainscough R."/>
            <person name="Almeida J.P."/>
            <person name="Ambrose K.D."/>
            <person name="Andrews T.D."/>
            <person name="Ashwell R.I.S."/>
            <person name="Babbage A.K."/>
            <person name="Bagguley C.L."/>
            <person name="Bailey J."/>
            <person name="Banerjee R."/>
            <person name="Barker D.J."/>
            <person name="Barlow K.F."/>
            <person name="Bates K."/>
            <person name="Beare D.M."/>
            <person name="Beasley H."/>
            <person name="Beasley O."/>
            <person name="Bird C.P."/>
            <person name="Blakey S.E."/>
            <person name="Bray-Allen S."/>
            <person name="Brook J."/>
            <person name="Brown A.J."/>
            <person name="Brown J.Y."/>
            <person name="Burford D.C."/>
            <person name="Burrill W."/>
            <person name="Burton J."/>
            <person name="Carder C."/>
            <person name="Carter N.P."/>
            <person name="Chapman J.C."/>
            <person name="Clark S.Y."/>
            <person name="Clark G."/>
            <person name="Clee C.M."/>
            <person name="Clegg S."/>
            <person name="Cobley V."/>
            <person name="Collier R.E."/>
            <person name="Collins J.E."/>
            <person name="Colman L.K."/>
            <person name="Corby N.R."/>
            <person name="Coville G.J."/>
            <person name="Culley K.M."/>
            <person name="Dhami P."/>
            <person name="Davies J."/>
            <person name="Dunn M."/>
            <person name="Earthrowl M.E."/>
            <person name="Ellington A.E."/>
            <person name="Evans K.A."/>
            <person name="Faulkner L."/>
            <person name="Francis M.D."/>
            <person name="Frankish A."/>
            <person name="Frankland J."/>
            <person name="French L."/>
            <person name="Garner P."/>
            <person name="Garnett J."/>
            <person name="Ghori M.J."/>
            <person name="Gilby L.M."/>
            <person name="Gillson C.J."/>
            <person name="Glithero R.J."/>
            <person name="Grafham D.V."/>
            <person name="Grant M."/>
            <person name="Gribble S."/>
            <person name="Griffiths C."/>
            <person name="Griffiths M.N.D."/>
            <person name="Hall R."/>
            <person name="Halls K.S."/>
            <person name="Hammond S."/>
            <person name="Harley J.L."/>
            <person name="Hart E.A."/>
            <person name="Heath P.D."/>
            <person name="Heathcott R."/>
            <person name="Holmes S.J."/>
            <person name="Howden P.J."/>
            <person name="Howe K.L."/>
            <person name="Howell G.R."/>
            <person name="Huckle E."/>
            <person name="Humphray S.J."/>
            <person name="Humphries M.D."/>
            <person name="Hunt A.R."/>
            <person name="Johnson C.M."/>
            <person name="Joy A.A."/>
            <person name="Kay M."/>
            <person name="Keenan S.J."/>
            <person name="Kimberley A.M."/>
            <person name="King A."/>
            <person name="Laird G.K."/>
            <person name="Langford C."/>
            <person name="Lawlor S."/>
            <person name="Leongamornlert D.A."/>
            <person name="Leversha M."/>
            <person name="Lloyd C.R."/>
            <person name="Lloyd D.M."/>
            <person name="Loveland J.E."/>
            <person name="Lovell J."/>
            <person name="Martin S."/>
            <person name="Mashreghi-Mohammadi M."/>
            <person name="Maslen G.L."/>
            <person name="Matthews L."/>
            <person name="McCann O.T."/>
            <person name="McLaren S.J."/>
            <person name="McLay K."/>
            <person name="McMurray A."/>
            <person name="Moore M.J.F."/>
            <person name="Mullikin J.C."/>
            <person name="Niblett D."/>
            <person name="Nickerson T."/>
            <person name="Novik K.L."/>
            <person name="Oliver K."/>
            <person name="Overton-Larty E.K."/>
            <person name="Parker A."/>
            <person name="Patel R."/>
            <person name="Pearce A.V."/>
            <person name="Peck A.I."/>
            <person name="Phillimore B.J.C.T."/>
            <person name="Phillips S."/>
            <person name="Plumb R.W."/>
            <person name="Porter K.M."/>
            <person name="Ramsey Y."/>
            <person name="Ranby S.A."/>
            <person name="Rice C.M."/>
            <person name="Ross M.T."/>
            <person name="Searle S.M."/>
            <person name="Sehra H.K."/>
            <person name="Sheridan E."/>
            <person name="Skuce C.D."/>
            <person name="Smith S."/>
            <person name="Smith M."/>
            <person name="Spraggon L."/>
            <person name="Squares S.L."/>
            <person name="Steward C.A."/>
            <person name="Sycamore N."/>
            <person name="Tamlyn-Hall G."/>
            <person name="Tester J."/>
            <person name="Theaker A.J."/>
            <person name="Thomas D.W."/>
            <person name="Thorpe A."/>
            <person name="Tracey A."/>
            <person name="Tromans A."/>
            <person name="Tubby B."/>
            <person name="Wall M."/>
            <person name="Wallis J.M."/>
            <person name="West A.P."/>
            <person name="White S.S."/>
            <person name="Whitehead S.L."/>
            <person name="Whittaker H."/>
            <person name="Wild A."/>
            <person name="Willey D.J."/>
            <person name="Wilmer T.E."/>
            <person name="Wood J.M."/>
            <person name="Wray P.W."/>
            <person name="Wyatt J.C."/>
            <person name="Young L."/>
            <person name="Younger R.M."/>
            <person name="Bentley D.R."/>
            <person name="Coulson A."/>
            <person name="Durbin R.M."/>
            <person name="Hubbard T."/>
            <person name="Sulston J.E."/>
            <person name="Dunham I."/>
            <person name="Rogers J."/>
            <person name="Beck S."/>
        </authorList>
    </citation>
    <scope>NUCLEOTIDE SEQUENCE [LARGE SCALE GENOMIC DNA]</scope>
</reference>
<reference key="2">
    <citation type="submission" date="2005-07" db="EMBL/GenBank/DDBJ databases">
        <authorList>
            <person name="Mural R.J."/>
            <person name="Istrail S."/>
            <person name="Sutton G.G."/>
            <person name="Florea L."/>
            <person name="Halpern A.L."/>
            <person name="Mobarry C.M."/>
            <person name="Lippert R."/>
            <person name="Walenz B."/>
            <person name="Shatkay H."/>
            <person name="Dew I."/>
            <person name="Miller J.R."/>
            <person name="Flanigan M.J."/>
            <person name="Edwards N.J."/>
            <person name="Bolanos R."/>
            <person name="Fasulo D."/>
            <person name="Halldorsson B.V."/>
            <person name="Hannenhalli S."/>
            <person name="Turner R."/>
            <person name="Yooseph S."/>
            <person name="Lu F."/>
            <person name="Nusskern D.R."/>
            <person name="Shue B.C."/>
            <person name="Zheng X.H."/>
            <person name="Zhong F."/>
            <person name="Delcher A.L."/>
            <person name="Huson D.H."/>
            <person name="Kravitz S.A."/>
            <person name="Mouchard L."/>
            <person name="Reinert K."/>
            <person name="Remington K.A."/>
            <person name="Clark A.G."/>
            <person name="Waterman M.S."/>
            <person name="Eichler E.E."/>
            <person name="Adams M.D."/>
            <person name="Hunkapiller M.W."/>
            <person name="Myers E.W."/>
            <person name="Venter J.C."/>
        </authorList>
    </citation>
    <scope>NUCLEOTIDE SEQUENCE [LARGE SCALE GENOMIC DNA]</scope>
</reference>
<reference key="3">
    <citation type="journal article" date="2004" name="Genome Res.">
        <title>The status, quality, and expansion of the NIH full-length cDNA project: the Mammalian Gene Collection (MGC).</title>
        <authorList>
            <consortium name="The MGC Project Team"/>
        </authorList>
    </citation>
    <scope>NUCLEOTIDE SEQUENCE [LARGE SCALE MRNA] (ISOFORM 1)</scope>
    <source>
        <tissue>Embryonic stem cell</tissue>
    </source>
</reference>
<reference key="4">
    <citation type="journal article" date="2007" name="Mol. Cell">
        <title>20S proteasome assembly is orchestrated by two distinct pairs of chaperones in yeast and in mammals.</title>
        <authorList>
            <person name="Le Tallec B."/>
            <person name="Barrault M.-B."/>
            <person name="Courbeyrette R."/>
            <person name="Guerois R."/>
            <person name="Marsolier-Kergoat M.-C."/>
            <person name="Peyroche A."/>
        </authorList>
    </citation>
    <scope>IDENTIFICATION</scope>
</reference>
<reference key="5">
    <citation type="journal article" date="2013" name="Annu. Rev. Biochem.">
        <title>Molecular architecture and assembly of the eukaryotic proteasome.</title>
        <authorList>
            <person name="Tomko R.J. Jr."/>
            <person name="Hochstrasser M."/>
        </authorList>
    </citation>
    <scope>NOMENCLATURE</scope>
</reference>
<reference key="6">
    <citation type="journal article" date="2017" name="Clin. Immunol.">
        <title>Genetic modifiers of multiple sclerosis progression, severity and onset.</title>
        <authorList>
            <person name="Sadovnick A.D."/>
            <person name="Traboulsee A.L."/>
            <person name="Zhao Y."/>
            <person name="Bernales C.Q."/>
            <person name="Encarnacion M."/>
            <person name="Ross J.P."/>
            <person name="Yee I.M."/>
            <person name="Criscuoli M.G."/>
            <person name="Vilarino-Gueell C."/>
        </authorList>
    </citation>
    <scope>VARIANT ARG-99 (ISOFORM 2)</scope>
</reference>
<dbReference type="EMBL" id="AL445309">
    <property type="status" value="NOT_ANNOTATED_CDS"/>
    <property type="molecule type" value="Genomic_DNA"/>
</dbReference>
<dbReference type="EMBL" id="CH471087">
    <property type="protein sequence ID" value="EAW55130.1"/>
    <property type="molecule type" value="Genomic_DNA"/>
</dbReference>
<dbReference type="EMBL" id="CD173424">
    <property type="status" value="NOT_ANNOTATED_CDS"/>
    <property type="molecule type" value="mRNA"/>
</dbReference>
<dbReference type="CCDS" id="CCDS47360.1">
    <molecule id="Q5JS54-2"/>
</dbReference>
<dbReference type="CCDS" id="CCDS47361.1">
    <molecule id="Q5JS54-1"/>
</dbReference>
<dbReference type="CCDS" id="CCDS47362.1">
    <molecule id="Q5JS54-3"/>
</dbReference>
<dbReference type="RefSeq" id="NP_001122063.1">
    <molecule id="Q5JS54-1"/>
    <property type="nucleotide sequence ID" value="NM_001128591.2"/>
</dbReference>
<dbReference type="RefSeq" id="NP_001122064.1">
    <molecule id="Q5JS54-2"/>
    <property type="nucleotide sequence ID" value="NM_001128592.2"/>
</dbReference>
<dbReference type="RefSeq" id="NP_001129222.1">
    <molecule id="Q5JS54-3"/>
    <property type="nucleotide sequence ID" value="NM_001135750.2"/>
</dbReference>
<dbReference type="PDB" id="5WTQ">
    <property type="method" value="X-ray"/>
    <property type="resolution" value="1.90 A"/>
    <property type="chains" value="A/B/C/D=1-123"/>
</dbReference>
<dbReference type="PDB" id="8QYJ">
    <property type="method" value="EM"/>
    <property type="resolution" value="2.73 A"/>
    <property type="chains" value="M=1-123"/>
</dbReference>
<dbReference type="PDB" id="8TM3">
    <property type="method" value="EM"/>
    <property type="resolution" value="3.00 A"/>
    <property type="chains" value="j=1-123"/>
</dbReference>
<dbReference type="PDBsum" id="5WTQ"/>
<dbReference type="PDBsum" id="8QYJ"/>
<dbReference type="PDBsum" id="8TM3"/>
<dbReference type="EMDB" id="EMD-18755"/>
<dbReference type="EMDB" id="EMD-41377"/>
<dbReference type="SMR" id="Q5JS54"/>
<dbReference type="BioGRID" id="133110">
    <property type="interactions" value="67"/>
</dbReference>
<dbReference type="ComplexPortal" id="CPX-8174">
    <property type="entry name" value="PSMG3-PSMG4 proteasomal chaperone complex"/>
</dbReference>
<dbReference type="CORUM" id="Q5JS54"/>
<dbReference type="FunCoup" id="Q5JS54">
    <property type="interactions" value="261"/>
</dbReference>
<dbReference type="IntAct" id="Q5JS54">
    <property type="interactions" value="44"/>
</dbReference>
<dbReference type="STRING" id="9606.ENSP00000392353"/>
<dbReference type="GlyGen" id="Q5JS54">
    <property type="glycosylation" value="1 site, 1 O-linked glycan (1 site)"/>
</dbReference>
<dbReference type="iPTMnet" id="Q5JS54"/>
<dbReference type="PhosphoSitePlus" id="Q5JS54"/>
<dbReference type="BioMuta" id="PSMG4"/>
<dbReference type="DMDM" id="190360085"/>
<dbReference type="jPOST" id="Q5JS54"/>
<dbReference type="MassIVE" id="Q5JS54"/>
<dbReference type="PeptideAtlas" id="Q5JS54"/>
<dbReference type="ProteomicsDB" id="30974"/>
<dbReference type="ProteomicsDB" id="63135">
    <molecule id="Q5JS54-1"/>
</dbReference>
<dbReference type="ProteomicsDB" id="8201"/>
<dbReference type="Pumba" id="Q5JS54"/>
<dbReference type="TopDownProteomics" id="Q5JS54-1">
    <molecule id="Q5JS54-1"/>
</dbReference>
<dbReference type="Antibodypedia" id="78115">
    <property type="antibodies" value="7 antibodies from 4 providers"/>
</dbReference>
<dbReference type="DNASU" id="389362"/>
<dbReference type="Ensembl" id="ENST00000419065.6">
    <molecule id="Q5JS54-2"/>
    <property type="protein sequence ID" value="ENSP00000392353.2"/>
    <property type="gene ID" value="ENSG00000180822.12"/>
</dbReference>
<dbReference type="Ensembl" id="ENST00000438998.7">
    <molecule id="Q5JS54-1"/>
    <property type="protein sequence ID" value="ENSP00000413353.3"/>
    <property type="gene ID" value="ENSG00000180822.12"/>
</dbReference>
<dbReference type="Ensembl" id="ENST00000473000.2">
    <molecule id="Q5JS54-3"/>
    <property type="protein sequence ID" value="ENSP00000418241.2"/>
    <property type="gene ID" value="ENSG00000180822.12"/>
</dbReference>
<dbReference type="GeneID" id="389362"/>
<dbReference type="KEGG" id="hsa:389362"/>
<dbReference type="MANE-Select" id="ENST00000438998.7">
    <property type="protein sequence ID" value="ENSP00000413353.3"/>
    <property type="RefSeq nucleotide sequence ID" value="NM_001128591.2"/>
    <property type="RefSeq protein sequence ID" value="NP_001122063.1"/>
</dbReference>
<dbReference type="UCSC" id="uc003mvl.2">
    <molecule id="Q5JS54-1"/>
    <property type="organism name" value="human"/>
</dbReference>
<dbReference type="AGR" id="HGNC:21108"/>
<dbReference type="CTD" id="389362"/>
<dbReference type="DisGeNET" id="389362"/>
<dbReference type="GeneCards" id="PSMG4"/>
<dbReference type="HGNC" id="HGNC:21108">
    <property type="gene designation" value="PSMG4"/>
</dbReference>
<dbReference type="HPA" id="ENSG00000180822">
    <property type="expression patterns" value="Low tissue specificity"/>
</dbReference>
<dbReference type="MIM" id="617550">
    <property type="type" value="gene"/>
</dbReference>
<dbReference type="neXtProt" id="NX_Q5JS54"/>
<dbReference type="OpenTargets" id="ENSG00000180822"/>
<dbReference type="PharmGKB" id="PA162400256"/>
<dbReference type="VEuPathDB" id="HostDB:ENSG00000180822"/>
<dbReference type="GeneTree" id="ENSGT00390000011804"/>
<dbReference type="HOGENOM" id="CLU_138031_0_0_1"/>
<dbReference type="InParanoid" id="Q5JS54"/>
<dbReference type="OMA" id="HVMKLDG"/>
<dbReference type="OrthoDB" id="368507at2759"/>
<dbReference type="PAN-GO" id="Q5JS54">
    <property type="GO annotations" value="0 GO annotations based on evolutionary models"/>
</dbReference>
<dbReference type="PhylomeDB" id="Q5JS54"/>
<dbReference type="TreeFam" id="TF353302"/>
<dbReference type="PathwayCommons" id="Q5JS54"/>
<dbReference type="Reactome" id="R-HSA-9907900">
    <property type="pathway name" value="Proteasome assembly"/>
</dbReference>
<dbReference type="SignaLink" id="Q5JS54"/>
<dbReference type="BioGRID-ORCS" id="389362">
    <property type="hits" value="763 hits in 1167 CRISPR screens"/>
</dbReference>
<dbReference type="ChiTaRS" id="PSMG4">
    <property type="organism name" value="human"/>
</dbReference>
<dbReference type="GenomeRNAi" id="389362"/>
<dbReference type="Pharos" id="Q5JS54">
    <property type="development level" value="Tdark"/>
</dbReference>
<dbReference type="PRO" id="PR:Q5JS54"/>
<dbReference type="Proteomes" id="UP000005640">
    <property type="component" value="Chromosome 6"/>
</dbReference>
<dbReference type="RNAct" id="Q5JS54">
    <property type="molecule type" value="protein"/>
</dbReference>
<dbReference type="Bgee" id="ENSG00000180822">
    <property type="expression patterns" value="Expressed in oocyte and 195 other cell types or tissues"/>
</dbReference>
<dbReference type="ExpressionAtlas" id="Q5JS54">
    <property type="expression patterns" value="baseline and differential"/>
</dbReference>
<dbReference type="GO" id="GO:0005829">
    <property type="term" value="C:cytosol"/>
    <property type="evidence" value="ECO:0000304"/>
    <property type="project" value="Reactome"/>
</dbReference>
<dbReference type="GO" id="GO:0032991">
    <property type="term" value="C:protein-containing complex"/>
    <property type="evidence" value="ECO:0000250"/>
    <property type="project" value="UniProtKB"/>
</dbReference>
<dbReference type="GO" id="GO:0044877">
    <property type="term" value="F:protein-containing complex binding"/>
    <property type="evidence" value="ECO:0000250"/>
    <property type="project" value="UniProtKB"/>
</dbReference>
<dbReference type="GO" id="GO:0043248">
    <property type="term" value="P:proteasome assembly"/>
    <property type="evidence" value="ECO:0007669"/>
    <property type="project" value="InterPro"/>
</dbReference>
<dbReference type="InterPro" id="IPR032157">
    <property type="entry name" value="PAC4"/>
</dbReference>
<dbReference type="PANTHER" id="PTHR33559">
    <property type="entry name" value="PROTEASOME ASSEMBLY CHAPERONE 4"/>
    <property type="match status" value="1"/>
</dbReference>
<dbReference type="PANTHER" id="PTHR33559:SF1">
    <property type="entry name" value="PROTEASOME ASSEMBLY CHAPERONE 4"/>
    <property type="match status" value="1"/>
</dbReference>
<dbReference type="Pfam" id="PF16093">
    <property type="entry name" value="PAC4"/>
    <property type="match status" value="1"/>
</dbReference>
<accession>Q5JS54</accession>
<accession>C9J2F8</accession>
<accession>F8WBZ2</accession>
<accession>Q5JS53</accession>
<accession>Q5JS56</accession>
<sequence length="123" mass="13775">MEGLVVAAGGDVSLHNFSARLWEQLVHFHVMRLTDSLFLWVGATPHLRNLAVAMCSRYDSIPVSTSLLGDTSDTTSTGLAQRLARKTNKQVFVSYNLQNTDSNFALLVENRIKEEMEAFPEKF</sequence>
<proteinExistence type="evidence at protein level"/>
<organism>
    <name type="scientific">Homo sapiens</name>
    <name type="common">Human</name>
    <dbReference type="NCBI Taxonomy" id="9606"/>
    <lineage>
        <taxon>Eukaryota</taxon>
        <taxon>Metazoa</taxon>
        <taxon>Chordata</taxon>
        <taxon>Craniata</taxon>
        <taxon>Vertebrata</taxon>
        <taxon>Euteleostomi</taxon>
        <taxon>Mammalia</taxon>
        <taxon>Eutheria</taxon>
        <taxon>Euarchontoglires</taxon>
        <taxon>Primates</taxon>
        <taxon>Haplorrhini</taxon>
        <taxon>Catarrhini</taxon>
        <taxon>Hominidae</taxon>
        <taxon>Homo</taxon>
    </lineage>
</organism>
<protein>
    <recommendedName>
        <fullName evidence="4">Proteasome assembly chaperone 4</fullName>
        <shortName evidence="3">PAC-4</shortName>
        <shortName>hPAC4</shortName>
    </recommendedName>
    <alternativeName>
        <fullName evidence="3">Proteasome chaperone homolog 4</fullName>
        <shortName evidence="3">Pba4</shortName>
    </alternativeName>
</protein>